<protein>
    <recommendedName>
        <fullName evidence="1">Ribulose bisphosphate carboxylase large chain</fullName>
        <shortName evidence="1">RuBisCO large subunit</shortName>
        <ecNumber evidence="1">4.1.1.39</ecNumber>
    </recommendedName>
</protein>
<name>RBL_IDEPO</name>
<feature type="chain" id="PRO_0000062495" description="Ribulose bisphosphate carboxylase large chain">
    <location>
        <begin position="1" status="less than"/>
        <end position="465"/>
    </location>
</feature>
<feature type="active site" description="Proton acceptor" evidence="1">
    <location>
        <position position="165"/>
    </location>
</feature>
<feature type="active site" description="Proton acceptor" evidence="1">
    <location>
        <position position="284"/>
    </location>
</feature>
<feature type="binding site" description="in homodimeric partner" evidence="1">
    <location>
        <position position="113"/>
    </location>
    <ligand>
        <name>substrate</name>
    </ligand>
</feature>
<feature type="binding site" evidence="1">
    <location>
        <position position="163"/>
    </location>
    <ligand>
        <name>substrate</name>
    </ligand>
</feature>
<feature type="binding site" evidence="1">
    <location>
        <position position="167"/>
    </location>
    <ligand>
        <name>substrate</name>
    </ligand>
</feature>
<feature type="binding site" description="via carbamate group" evidence="1">
    <location>
        <position position="191"/>
    </location>
    <ligand>
        <name>Mg(2+)</name>
        <dbReference type="ChEBI" id="CHEBI:18420"/>
    </ligand>
</feature>
<feature type="binding site" evidence="1">
    <location>
        <position position="193"/>
    </location>
    <ligand>
        <name>Mg(2+)</name>
        <dbReference type="ChEBI" id="CHEBI:18420"/>
    </ligand>
</feature>
<feature type="binding site" evidence="1">
    <location>
        <position position="194"/>
    </location>
    <ligand>
        <name>Mg(2+)</name>
        <dbReference type="ChEBI" id="CHEBI:18420"/>
    </ligand>
</feature>
<feature type="binding site" evidence="1">
    <location>
        <position position="285"/>
    </location>
    <ligand>
        <name>substrate</name>
    </ligand>
</feature>
<feature type="binding site" evidence="1">
    <location>
        <position position="317"/>
    </location>
    <ligand>
        <name>substrate</name>
    </ligand>
</feature>
<feature type="binding site" evidence="1">
    <location>
        <position position="369"/>
    </location>
    <ligand>
        <name>substrate</name>
    </ligand>
</feature>
<feature type="site" description="Transition state stabilizer" evidence="1">
    <location>
        <position position="324"/>
    </location>
</feature>
<feature type="modified residue" description="N6,N6,N6-trimethyllysine" evidence="1">
    <location>
        <position position="4"/>
    </location>
</feature>
<feature type="modified residue" description="N6-carboxylysine" evidence="1">
    <location>
        <position position="191"/>
    </location>
</feature>
<feature type="disulfide bond" description="Interchain; in linked form" evidence="1">
    <location>
        <position position="237"/>
    </location>
</feature>
<feature type="non-terminal residue">
    <location>
        <position position="1"/>
    </location>
</feature>
<sequence>VGFKAGVKDYKLTYYTPDYETKDTDILAAFRVTPQPGVPPEEAGAAVAAESSTGTWTTVWTDGLTSLDRYKGRCYDIEPVAGEENQYIAYVAYPLDLFEEGSVTNMFTSIVGNVFGFKALRALRLEDLRIPPAYSKTFQGPPHGIQVERDKLNKYGRPLLGCTIKPKLGLSAKNYGRAVYECLRGGLDFTKDDENVNSQPFMRWRDRFLFCAEALYKAQAETGEIKGHYLNATAGTCEEMIKRAVFARELGVPIVMHDYLTGGFTANTSLAHYCRDNGLLLHIHRAMHAVIDRQKNHGIHFRVLAKALRMSGGDHIHSGTVVGKLEGERDITLGFVDLLRDDFIEKDRSRGIYFTQDWVSLPGVLPVASGGIHVWHMPALTEIFGDDSVLQFGGGTLGHPWGNAPGAVANRVALEACVQARNEGRDLAREGNEIIREASKWSPELAAACEVWKEIKFEFQAMDTL</sequence>
<comment type="function">
    <text evidence="1">RuBisCO catalyzes two reactions: the carboxylation of D-ribulose 1,5-bisphosphate, the primary event in carbon dioxide fixation, as well as the oxidative fragmentation of the pentose substrate in the photorespiration process. Both reactions occur simultaneously and in competition at the same active site.</text>
</comment>
<comment type="catalytic activity">
    <reaction evidence="1">
        <text>2 (2R)-3-phosphoglycerate + 2 H(+) = D-ribulose 1,5-bisphosphate + CO2 + H2O</text>
        <dbReference type="Rhea" id="RHEA:23124"/>
        <dbReference type="ChEBI" id="CHEBI:15377"/>
        <dbReference type="ChEBI" id="CHEBI:15378"/>
        <dbReference type="ChEBI" id="CHEBI:16526"/>
        <dbReference type="ChEBI" id="CHEBI:57870"/>
        <dbReference type="ChEBI" id="CHEBI:58272"/>
        <dbReference type="EC" id="4.1.1.39"/>
    </reaction>
</comment>
<comment type="catalytic activity">
    <reaction evidence="1">
        <text>D-ribulose 1,5-bisphosphate + O2 = 2-phosphoglycolate + (2R)-3-phosphoglycerate + 2 H(+)</text>
        <dbReference type="Rhea" id="RHEA:36631"/>
        <dbReference type="ChEBI" id="CHEBI:15378"/>
        <dbReference type="ChEBI" id="CHEBI:15379"/>
        <dbReference type="ChEBI" id="CHEBI:57870"/>
        <dbReference type="ChEBI" id="CHEBI:58033"/>
        <dbReference type="ChEBI" id="CHEBI:58272"/>
    </reaction>
</comment>
<comment type="cofactor">
    <cofactor evidence="1">
        <name>Mg(2+)</name>
        <dbReference type="ChEBI" id="CHEBI:18420"/>
    </cofactor>
    <text evidence="1">Binds 1 Mg(2+) ion per subunit.</text>
</comment>
<comment type="subunit">
    <text evidence="1">Heterohexadecamer of 8 large chains and 8 small chains; disulfide-linked. The disulfide link is formed within the large subunit homodimers.</text>
</comment>
<comment type="subcellular location">
    <subcellularLocation>
        <location>Plastid</location>
        <location>Chloroplast</location>
    </subcellularLocation>
</comment>
<comment type="PTM">
    <text evidence="1">The disulfide bond which can form in the large chain dimeric partners within the hexadecamer appears to be associated with oxidative stress and protein turnover.</text>
</comment>
<comment type="miscellaneous">
    <text evidence="1">The basic functional RuBisCO is composed of a large chain homodimer in a 'head-to-tail' conformation. In form I RuBisCO this homodimer is arranged in a barrel-like tetramer with the small subunits forming a tetrameric 'cap' on each end of the 'barrel'.</text>
</comment>
<comment type="similarity">
    <text evidence="1">Belongs to the RuBisCO large chain family. Type I subfamily.</text>
</comment>
<gene>
    <name evidence="1" type="primary">rbcL</name>
</gene>
<proteinExistence type="inferred from homology"/>
<accession>Q9XPR5</accession>
<geneLocation type="chloroplast"/>
<organism>
    <name type="scientific">Idesia polycarpa</name>
    <name type="common">Iigiri tree</name>
    <dbReference type="NCBI Taxonomy" id="77057"/>
    <lineage>
        <taxon>Eukaryota</taxon>
        <taxon>Viridiplantae</taxon>
        <taxon>Streptophyta</taxon>
        <taxon>Embryophyta</taxon>
        <taxon>Tracheophyta</taxon>
        <taxon>Spermatophyta</taxon>
        <taxon>Magnoliopsida</taxon>
        <taxon>eudicotyledons</taxon>
        <taxon>Gunneridae</taxon>
        <taxon>Pentapetalae</taxon>
        <taxon>rosids</taxon>
        <taxon>fabids</taxon>
        <taxon>Malpighiales</taxon>
        <taxon>Salicaceae</taxon>
        <taxon>Flacourtieae</taxon>
        <taxon>Idesia</taxon>
    </lineage>
</organism>
<dbReference type="EC" id="4.1.1.39" evidence="1"/>
<dbReference type="EMBL" id="AB021924">
    <property type="protein sequence ID" value="BAA76673.1"/>
    <property type="molecule type" value="Genomic_DNA"/>
</dbReference>
<dbReference type="SMR" id="Q9XPR5"/>
<dbReference type="GO" id="GO:0009507">
    <property type="term" value="C:chloroplast"/>
    <property type="evidence" value="ECO:0007669"/>
    <property type="project" value="UniProtKB-SubCell"/>
</dbReference>
<dbReference type="GO" id="GO:0000287">
    <property type="term" value="F:magnesium ion binding"/>
    <property type="evidence" value="ECO:0007669"/>
    <property type="project" value="InterPro"/>
</dbReference>
<dbReference type="GO" id="GO:0004497">
    <property type="term" value="F:monooxygenase activity"/>
    <property type="evidence" value="ECO:0007669"/>
    <property type="project" value="UniProtKB-KW"/>
</dbReference>
<dbReference type="GO" id="GO:0016984">
    <property type="term" value="F:ribulose-bisphosphate carboxylase activity"/>
    <property type="evidence" value="ECO:0007669"/>
    <property type="project" value="UniProtKB-EC"/>
</dbReference>
<dbReference type="GO" id="GO:0009853">
    <property type="term" value="P:photorespiration"/>
    <property type="evidence" value="ECO:0007669"/>
    <property type="project" value="UniProtKB-KW"/>
</dbReference>
<dbReference type="GO" id="GO:0019253">
    <property type="term" value="P:reductive pentose-phosphate cycle"/>
    <property type="evidence" value="ECO:0007669"/>
    <property type="project" value="UniProtKB-KW"/>
</dbReference>
<dbReference type="CDD" id="cd08212">
    <property type="entry name" value="RuBisCO_large_I"/>
    <property type="match status" value="1"/>
</dbReference>
<dbReference type="FunFam" id="3.20.20.110:FF:000001">
    <property type="entry name" value="Ribulose bisphosphate carboxylase large chain"/>
    <property type="match status" value="1"/>
</dbReference>
<dbReference type="FunFam" id="3.30.70.150:FF:000001">
    <property type="entry name" value="Ribulose bisphosphate carboxylase large chain"/>
    <property type="match status" value="1"/>
</dbReference>
<dbReference type="Gene3D" id="3.20.20.110">
    <property type="entry name" value="Ribulose bisphosphate carboxylase, large subunit, C-terminal domain"/>
    <property type="match status" value="1"/>
</dbReference>
<dbReference type="Gene3D" id="3.30.70.150">
    <property type="entry name" value="RuBisCO large subunit, N-terminal domain"/>
    <property type="match status" value="1"/>
</dbReference>
<dbReference type="HAMAP" id="MF_01338">
    <property type="entry name" value="RuBisCO_L_type1"/>
    <property type="match status" value="1"/>
</dbReference>
<dbReference type="InterPro" id="IPR033966">
    <property type="entry name" value="RuBisCO"/>
</dbReference>
<dbReference type="InterPro" id="IPR020878">
    <property type="entry name" value="RuBisCo_large_chain_AS"/>
</dbReference>
<dbReference type="InterPro" id="IPR000685">
    <property type="entry name" value="RuBisCO_lsu_C"/>
</dbReference>
<dbReference type="InterPro" id="IPR036376">
    <property type="entry name" value="RuBisCO_lsu_C_sf"/>
</dbReference>
<dbReference type="InterPro" id="IPR017443">
    <property type="entry name" value="RuBisCO_lsu_fd_N"/>
</dbReference>
<dbReference type="InterPro" id="IPR036422">
    <property type="entry name" value="RuBisCO_lsu_N_sf"/>
</dbReference>
<dbReference type="InterPro" id="IPR020888">
    <property type="entry name" value="RuBisCO_lsuI"/>
</dbReference>
<dbReference type="NCBIfam" id="NF003252">
    <property type="entry name" value="PRK04208.1"/>
    <property type="match status" value="1"/>
</dbReference>
<dbReference type="PANTHER" id="PTHR42704">
    <property type="entry name" value="RIBULOSE BISPHOSPHATE CARBOXYLASE"/>
    <property type="match status" value="1"/>
</dbReference>
<dbReference type="PANTHER" id="PTHR42704:SF16">
    <property type="entry name" value="RIBULOSE BISPHOSPHATE CARBOXYLASE LARGE CHAIN"/>
    <property type="match status" value="1"/>
</dbReference>
<dbReference type="Pfam" id="PF00016">
    <property type="entry name" value="RuBisCO_large"/>
    <property type="match status" value="1"/>
</dbReference>
<dbReference type="Pfam" id="PF02788">
    <property type="entry name" value="RuBisCO_large_N"/>
    <property type="match status" value="1"/>
</dbReference>
<dbReference type="SFLD" id="SFLDG01052">
    <property type="entry name" value="RuBisCO"/>
    <property type="match status" value="1"/>
</dbReference>
<dbReference type="SFLD" id="SFLDS00014">
    <property type="entry name" value="RuBisCO"/>
    <property type="match status" value="1"/>
</dbReference>
<dbReference type="SFLD" id="SFLDG00301">
    <property type="entry name" value="RuBisCO-like_proteins"/>
    <property type="match status" value="1"/>
</dbReference>
<dbReference type="SUPFAM" id="SSF51649">
    <property type="entry name" value="RuBisCo, C-terminal domain"/>
    <property type="match status" value="1"/>
</dbReference>
<dbReference type="SUPFAM" id="SSF54966">
    <property type="entry name" value="RuBisCO, large subunit, small (N-terminal) domain"/>
    <property type="match status" value="1"/>
</dbReference>
<dbReference type="PROSITE" id="PS00157">
    <property type="entry name" value="RUBISCO_LARGE"/>
    <property type="match status" value="1"/>
</dbReference>
<reference key="1">
    <citation type="journal article" date="2000" name="Am. J. Bot.">
        <title>Phylogenetic relationships of Salix (Salicaceae) based on rbcL sequence data.</title>
        <authorList>
            <person name="Azuma T."/>
            <person name="Kajita T."/>
            <person name="Yokoyama J."/>
            <person name="Ohashi H."/>
        </authorList>
    </citation>
    <scope>NUCLEOTIDE SEQUENCE [GENOMIC DNA]</scope>
</reference>
<keyword id="KW-0113">Calvin cycle</keyword>
<keyword id="KW-0120">Carbon dioxide fixation</keyword>
<keyword id="KW-0150">Chloroplast</keyword>
<keyword id="KW-1015">Disulfide bond</keyword>
<keyword id="KW-0456">Lyase</keyword>
<keyword id="KW-0460">Magnesium</keyword>
<keyword id="KW-0479">Metal-binding</keyword>
<keyword id="KW-0488">Methylation</keyword>
<keyword id="KW-0503">Monooxygenase</keyword>
<keyword id="KW-0560">Oxidoreductase</keyword>
<keyword id="KW-0601">Photorespiration</keyword>
<keyword id="KW-0602">Photosynthesis</keyword>
<keyword id="KW-0934">Plastid</keyword>
<evidence type="ECO:0000255" key="1">
    <source>
        <dbReference type="HAMAP-Rule" id="MF_01338"/>
    </source>
</evidence>